<comment type="function">
    <text evidence="3 4 5 6 7 8 9 10 11 15">Transcription factor that plays a central role during early embryogenesis, oogenesis and flowering, probably by regulating expression of specific genes. Required to specify stem cell identity in meristems, such as shoot apical meristem (SAM). May induce shoot stem cells activity in order to maintain the stem cell identity. Involved in the developmental root meristem. In shoot apices, it is sufficient to induce the expression of CLV3, a putative ligand of the CLV signaling pathway. Also required to sustain organogenesis in the floral meristem by contributing to the expression of its own repressor, the AGAMOUS (AG) gene at the end of flower development. Binds directly to the 5'-TTAAT[GC][GC]-3' DNA sequence in the regulatory sequence of AG and activates its expression directly. Regulates one important step in ovule development to induce integument formation from the underlying chalazal domain. Participates in the promotion of vegetative to embryonic transition. Required to repress LEC1 expression.</text>
</comment>
<comment type="subunit">
    <text evidence="13 14">Interacts with TPL and TPR4. Interacts with BZIP30 (PubMed:27402171).</text>
</comment>
<comment type="interaction">
    <interactant intactId="EBI-2119269">
        <id>Q9SB92</id>
    </interactant>
    <interactant intactId="EBI-15191535">
        <id>O80748</id>
        <label>BBX26</label>
    </interactant>
    <organismsDiffer>false</organismsDiffer>
    <experiments>3</experiments>
</comment>
<comment type="interaction">
    <interactant intactId="EBI-2119269">
        <id>Q9SB92</id>
    </interactant>
    <interactant intactId="EBI-4426144">
        <id>Q9C9L2</id>
        <label>TCP15</label>
    </interactant>
    <organismsDiffer>false</organismsDiffer>
    <experiments>3</experiments>
</comment>
<comment type="interaction">
    <interactant intactId="EBI-2119269">
        <id>Q9SB92</id>
    </interactant>
    <interactant intactId="EBI-15192297">
        <id>Q9LQF0</id>
        <label>TCP23</label>
    </interactant>
    <organismsDiffer>false</organismsDiffer>
    <experiments>3</experiments>
</comment>
<comment type="interaction">
    <interactant intactId="EBI-2119269">
        <id>Q9SB92</id>
    </interactant>
    <interactant intactId="EBI-15192325">
        <id>Q8LPR5</id>
        <label>TCP4</label>
    </interactant>
    <organismsDiffer>false</organismsDiffer>
    <experiments>3</experiments>
</comment>
<comment type="interaction">
    <interactant intactId="EBI-2119269">
        <id>Q9SB92</id>
    </interactant>
    <interactant intactId="EBI-2119299">
        <id>Q94AI7</id>
        <label>TPL</label>
    </interactant>
    <organismsDiffer>false</organismsDiffer>
    <experiments>3</experiments>
</comment>
<comment type="subcellular location">
    <subcellularLocation>
        <location evidence="1 15">Nucleus</location>
    </subcellularLocation>
</comment>
<comment type="tissue specificity">
    <text evidence="7 15">In the active shoot meristem, it is specifically expressed in a small cell group underneath the presume position of stem cells. Also expressed in the floral meristem. Expressed in the nucellus of ovule primordia.</text>
</comment>
<comment type="developmental stage">
    <text evidence="15">Expressed from 16 cell embryo stage, long before shoot meristem is evident, and gradually become restricted to the center of shoot meristem primordium.</text>
</comment>
<comment type="induction">
    <text evidence="3 4 5 12">Repressed by the CLV (CLV1, CLV2 and CLV3) proteins, possibly to rapidly down-regulate WUS expression in apical daughter cells after cell divisions, suggesting the existence of a feedback loop. Repressed by AG at the end of floral development. Down-regulated by ULT1, probably to establish floral meristem determinacy.</text>
</comment>
<comment type="similarity">
    <text evidence="16">Belongs to the WUS homeobox family.</text>
</comment>
<name>WUS_ARATH</name>
<accession>Q9SB92</accession>
<accession>Q9SL51</accession>
<sequence>MEPPQHQHHHHQADQESGNNNNNKSGSGGYTCRQTSTRWTPTTEQIKILKELYYNNAIRSPTADQIQKITARLRQFGKIEGKNVFYWFQNHKARERQKKRFNGTNMTTPSSSPNSVMMAANDHYHPLLHHHHGVPMQRPANSVNVKLNQDHHLYHHNKPYPSFNNGNLNHASSGTECGVVNASNGYMSSHVYGSMEQDCSMNYNNVGGGWANMDHHYSSAPYNFFDRAKPLFGLEGHQEEEECGGDAYLEHRRTLPLFPMHGEDHINGGSGAIWKYGQSEVRPCASLELRLN</sequence>
<gene>
    <name type="primary">WUS</name>
    <name type="synonym">PGA6</name>
    <name type="ordered locus">At2g17950</name>
    <name type="ORF">T27K22.18</name>
</gene>
<protein>
    <recommendedName>
        <fullName>Protein WUSCHEL</fullName>
        <shortName>AtWUS</shortName>
    </recommendedName>
    <alternativeName>
        <fullName>Plant growth activator 6</fullName>
    </alternativeName>
</protein>
<feature type="chain" id="PRO_0000049383" description="Protein WUSCHEL">
    <location>
        <begin position="1"/>
        <end position="292"/>
    </location>
</feature>
<feature type="DNA-binding region" description="Homeobox; WUS-type" evidence="1">
    <location>
        <begin position="34"/>
        <end position="99"/>
    </location>
</feature>
<feature type="region of interest" description="Disordered" evidence="2">
    <location>
        <begin position="1"/>
        <end position="40"/>
    </location>
</feature>
<feature type="compositionally biased region" description="Basic residues" evidence="2">
    <location>
        <begin position="1"/>
        <end position="11"/>
    </location>
</feature>
<feature type="mutagenesis site" description="In wus-3; weak allele in which meristem stem cells are misspecified and appear to undergo differentiation." evidence="15">
    <original>P</original>
    <variation>L</variation>
    <location>
        <position position="41"/>
    </location>
</feature>
<feature type="sequence conflict" description="In Ref. 1; CAA09986." evidence="16" ref="1">
    <location>
        <position position="19"/>
    </location>
</feature>
<feature type="sequence conflict" description="In Ref. 1; CAA09986." evidence="16" ref="1">
    <original>E</original>
    <variation>D</variation>
    <location>
        <position position="239"/>
    </location>
</feature>
<feature type="helix" evidence="17">
    <location>
        <begin position="43"/>
        <end position="55"/>
    </location>
</feature>
<feature type="helix" evidence="17">
    <location>
        <begin position="63"/>
        <end position="73"/>
    </location>
</feature>
<feature type="helix" evidence="17">
    <location>
        <begin position="74"/>
        <end position="76"/>
    </location>
</feature>
<feature type="helix" evidence="17">
    <location>
        <begin position="81"/>
        <end position="98"/>
    </location>
</feature>
<dbReference type="EMBL" id="AJ012310">
    <property type="protein sequence ID" value="CAA09986.1"/>
    <property type="molecule type" value="mRNA"/>
</dbReference>
<dbReference type="EMBL" id="AC006201">
    <property type="protein sequence ID" value="AAD20131.2"/>
    <property type="molecule type" value="Genomic_DNA"/>
</dbReference>
<dbReference type="EMBL" id="CP002685">
    <property type="protein sequence ID" value="AEC06704.1"/>
    <property type="molecule type" value="Genomic_DNA"/>
</dbReference>
<dbReference type="EMBL" id="AY086385">
    <property type="protein sequence ID" value="AAM64452.1"/>
    <property type="molecule type" value="mRNA"/>
</dbReference>
<dbReference type="PIR" id="D84558">
    <property type="entry name" value="D84558"/>
</dbReference>
<dbReference type="PIR" id="T00829">
    <property type="entry name" value="T00829"/>
</dbReference>
<dbReference type="RefSeq" id="NP_565429.1">
    <property type="nucleotide sequence ID" value="NM_127349.4"/>
</dbReference>
<dbReference type="PDB" id="6RY3">
    <property type="method" value="X-ray"/>
    <property type="resolution" value="1.37 A"/>
    <property type="chains" value="A=34-103"/>
</dbReference>
<dbReference type="PDB" id="6RYD">
    <property type="method" value="X-ray"/>
    <property type="resolution" value="1.57 A"/>
    <property type="chains" value="A/B/E/F=34-103"/>
</dbReference>
<dbReference type="PDB" id="6RYI">
    <property type="method" value="X-ray"/>
    <property type="resolution" value="2.69 A"/>
    <property type="chains" value="A/B/C/D/E=34-103"/>
</dbReference>
<dbReference type="PDB" id="6RYL">
    <property type="method" value="X-ray"/>
    <property type="resolution" value="2.63 A"/>
    <property type="chains" value="A/B/C/D/E=34-103"/>
</dbReference>
<dbReference type="PDBsum" id="6RY3"/>
<dbReference type="PDBsum" id="6RYD"/>
<dbReference type="PDBsum" id="6RYI"/>
<dbReference type="PDBsum" id="6RYL"/>
<dbReference type="SMR" id="Q9SB92"/>
<dbReference type="BioGRID" id="1662">
    <property type="interactions" value="33"/>
</dbReference>
<dbReference type="FunCoup" id="Q9SB92">
    <property type="interactions" value="172"/>
</dbReference>
<dbReference type="IntAct" id="Q9SB92">
    <property type="interactions" value="54"/>
</dbReference>
<dbReference type="STRING" id="3702.Q9SB92"/>
<dbReference type="PaxDb" id="3702-AT2G17950.1"/>
<dbReference type="ProteomicsDB" id="242507"/>
<dbReference type="EnsemblPlants" id="AT2G17950.1">
    <property type="protein sequence ID" value="AT2G17950.1"/>
    <property type="gene ID" value="AT2G17950"/>
</dbReference>
<dbReference type="GeneID" id="816305"/>
<dbReference type="Gramene" id="AT2G17950.1">
    <property type="protein sequence ID" value="AT2G17950.1"/>
    <property type="gene ID" value="AT2G17950"/>
</dbReference>
<dbReference type="KEGG" id="ath:AT2G17950"/>
<dbReference type="Araport" id="AT2G17950"/>
<dbReference type="TAIR" id="AT2G17950">
    <property type="gene designation" value="WUS"/>
</dbReference>
<dbReference type="eggNOG" id="ENOG502QRYV">
    <property type="taxonomic scope" value="Eukaryota"/>
</dbReference>
<dbReference type="HOGENOM" id="CLU_1024520_0_0_1"/>
<dbReference type="InParanoid" id="Q9SB92"/>
<dbReference type="OMA" id="HHHGVTM"/>
<dbReference type="PhylomeDB" id="Q9SB92"/>
<dbReference type="PRO" id="PR:Q9SB92"/>
<dbReference type="Proteomes" id="UP000006548">
    <property type="component" value="Chromosome 2"/>
</dbReference>
<dbReference type="ExpressionAtlas" id="Q9SB92">
    <property type="expression patterns" value="baseline and differential"/>
</dbReference>
<dbReference type="GO" id="GO:0005634">
    <property type="term" value="C:nucleus"/>
    <property type="evidence" value="ECO:0007669"/>
    <property type="project" value="UniProtKB-SubCell"/>
</dbReference>
<dbReference type="GO" id="GO:0003700">
    <property type="term" value="F:DNA-binding transcription factor activity"/>
    <property type="evidence" value="ECO:0000250"/>
    <property type="project" value="TAIR"/>
</dbReference>
<dbReference type="GO" id="GO:0000976">
    <property type="term" value="F:transcription cis-regulatory region binding"/>
    <property type="evidence" value="ECO:0000353"/>
    <property type="project" value="TAIR"/>
</dbReference>
<dbReference type="GO" id="GO:0048653">
    <property type="term" value="P:anther development"/>
    <property type="evidence" value="ECO:0000315"/>
    <property type="project" value="TAIR"/>
</dbReference>
<dbReference type="GO" id="GO:0090506">
    <property type="term" value="P:axillary shoot meristem initiation"/>
    <property type="evidence" value="ECO:0000315"/>
    <property type="project" value="TAIR"/>
</dbReference>
<dbReference type="GO" id="GO:0030154">
    <property type="term" value="P:cell differentiation"/>
    <property type="evidence" value="ECO:0007669"/>
    <property type="project" value="UniProtKB-KW"/>
</dbReference>
<dbReference type="GO" id="GO:0006355">
    <property type="term" value="P:regulation of DNA-templated transcription"/>
    <property type="evidence" value="ECO:0000304"/>
    <property type="project" value="TAIR"/>
</dbReference>
<dbReference type="GO" id="GO:0019827">
    <property type="term" value="P:stem cell population maintenance"/>
    <property type="evidence" value="ECO:0000315"/>
    <property type="project" value="TAIR"/>
</dbReference>
<dbReference type="GO" id="GO:0080166">
    <property type="term" value="P:stomium development"/>
    <property type="evidence" value="ECO:0000315"/>
    <property type="project" value="TAIR"/>
</dbReference>
<dbReference type="CDD" id="cd00086">
    <property type="entry name" value="homeodomain"/>
    <property type="match status" value="1"/>
</dbReference>
<dbReference type="Gene3D" id="1.10.10.60">
    <property type="entry name" value="Homeodomain-like"/>
    <property type="match status" value="1"/>
</dbReference>
<dbReference type="InterPro" id="IPR001356">
    <property type="entry name" value="HD"/>
</dbReference>
<dbReference type="InterPro" id="IPR009057">
    <property type="entry name" value="Homeodomain-like_sf"/>
</dbReference>
<dbReference type="InterPro" id="IPR044555">
    <property type="entry name" value="WUSCHEL-like"/>
</dbReference>
<dbReference type="PANTHER" id="PTHR45940:SF34">
    <property type="entry name" value="PROTEIN WUSCHEL"/>
    <property type="match status" value="1"/>
</dbReference>
<dbReference type="PANTHER" id="PTHR45940">
    <property type="entry name" value="WUSCHEL-RELATED HOMEOBOX 1-RELATED"/>
    <property type="match status" value="1"/>
</dbReference>
<dbReference type="Pfam" id="PF00046">
    <property type="entry name" value="Homeodomain"/>
    <property type="match status" value="1"/>
</dbReference>
<dbReference type="SMART" id="SM00389">
    <property type="entry name" value="HOX"/>
    <property type="match status" value="1"/>
</dbReference>
<dbReference type="SUPFAM" id="SSF46689">
    <property type="entry name" value="Homeodomain-like"/>
    <property type="match status" value="1"/>
</dbReference>
<dbReference type="PROSITE" id="PS50071">
    <property type="entry name" value="HOMEOBOX_2"/>
    <property type="match status" value="1"/>
</dbReference>
<reference key="1">
    <citation type="journal article" date="1998" name="Cell">
        <title>Role of WUSCHEL in regulating stem cell fate in the Arabidopsis shoot meristem.</title>
        <authorList>
            <person name="Mayer K.F.X."/>
            <person name="Schoof H."/>
            <person name="Haecker A."/>
            <person name="Lenhard M."/>
            <person name="Juergens G."/>
            <person name="Laux T."/>
        </authorList>
    </citation>
    <scope>NUCLEOTIDE SEQUENCE [MRNA]</scope>
    <scope>FUNCTION</scope>
    <scope>SUBCELLULAR LOCATION</scope>
    <scope>TISSUE SPECIFICITY</scope>
    <scope>DEVELOPMENTAL STAGE</scope>
    <scope>MUTAGENESIS OF PRO-41</scope>
    <source>
        <strain>cv. Landsberg erecta</strain>
        <tissue>Flower</tissue>
    </source>
</reference>
<reference key="2">
    <citation type="journal article" date="1999" name="Nature">
        <title>Sequence and analysis of chromosome 2 of the plant Arabidopsis thaliana.</title>
        <authorList>
            <person name="Lin X."/>
            <person name="Kaul S."/>
            <person name="Rounsley S.D."/>
            <person name="Shea T.P."/>
            <person name="Benito M.-I."/>
            <person name="Town C.D."/>
            <person name="Fujii C.Y."/>
            <person name="Mason T.M."/>
            <person name="Bowman C.L."/>
            <person name="Barnstead M.E."/>
            <person name="Feldblyum T.V."/>
            <person name="Buell C.R."/>
            <person name="Ketchum K.A."/>
            <person name="Lee J.J."/>
            <person name="Ronning C.M."/>
            <person name="Koo H.L."/>
            <person name="Moffat K.S."/>
            <person name="Cronin L.A."/>
            <person name="Shen M."/>
            <person name="Pai G."/>
            <person name="Van Aken S."/>
            <person name="Umayam L."/>
            <person name="Tallon L.J."/>
            <person name="Gill J.E."/>
            <person name="Adams M.D."/>
            <person name="Carrera A.J."/>
            <person name="Creasy T.H."/>
            <person name="Goodman H.M."/>
            <person name="Somerville C.R."/>
            <person name="Copenhaver G.P."/>
            <person name="Preuss D."/>
            <person name="Nierman W.C."/>
            <person name="White O."/>
            <person name="Eisen J.A."/>
            <person name="Salzberg S.L."/>
            <person name="Fraser C.M."/>
            <person name="Venter J.C."/>
        </authorList>
    </citation>
    <scope>NUCLEOTIDE SEQUENCE [LARGE SCALE GENOMIC DNA]</scope>
    <source>
        <strain>cv. Columbia</strain>
    </source>
</reference>
<reference key="3">
    <citation type="journal article" date="2017" name="Plant J.">
        <title>Araport11: a complete reannotation of the Arabidopsis thaliana reference genome.</title>
        <authorList>
            <person name="Cheng C.Y."/>
            <person name="Krishnakumar V."/>
            <person name="Chan A.P."/>
            <person name="Thibaud-Nissen F."/>
            <person name="Schobel S."/>
            <person name="Town C.D."/>
        </authorList>
    </citation>
    <scope>GENOME REANNOTATION</scope>
    <source>
        <strain>cv. Columbia</strain>
    </source>
</reference>
<reference key="4">
    <citation type="submission" date="2002-03" db="EMBL/GenBank/DDBJ databases">
        <title>Full-length cDNA from Arabidopsis thaliana.</title>
        <authorList>
            <person name="Brover V.V."/>
            <person name="Troukhan M.E."/>
            <person name="Alexandrov N.A."/>
            <person name="Lu Y.-P."/>
            <person name="Flavell R.B."/>
            <person name="Feldmann K.A."/>
        </authorList>
    </citation>
    <scope>NUCLEOTIDE SEQUENCE [LARGE SCALE MRNA]</scope>
</reference>
<reference key="5">
    <citation type="journal article" date="2000" name="Cell">
        <title>The stem cell population of Arabidopsis shoot meristems in maintained by a regulatory loop between the CLAVATA and WUSCHEL genes.</title>
        <authorList>
            <person name="Schoof H."/>
            <person name="Lenhard M."/>
            <person name="Haecker A."/>
            <person name="Mayer K.F.X."/>
            <person name="Juergens G."/>
            <person name="Laux T."/>
        </authorList>
    </citation>
    <scope>FUNCTION</scope>
    <scope>INDUCTION</scope>
</reference>
<reference key="6">
    <citation type="journal article" date="2001" name="Cell">
        <title>A molecular link between stem cell regulation and floral patterning in Arabidopsis.</title>
        <authorList>
            <person name="Lohmann J.U."/>
            <person name="Hong R.L."/>
            <person name="Hobe M."/>
            <person name="Busch M.A."/>
            <person name="Parcy F."/>
            <person name="Simon R."/>
            <person name="Weigel D."/>
        </authorList>
    </citation>
    <scope>FUNCTION</scope>
    <scope>DNA-BINDING</scope>
    <scope>INDUCTION</scope>
</reference>
<reference key="7">
    <citation type="journal article" date="2001" name="Cell">
        <title>Termination of stem cell maintenance in Arabidopsis floral meristems by interactions between WUSCHEL and AGAMOUS.</title>
        <authorList>
            <person name="Lenhard M."/>
            <person name="Bohnert A."/>
            <person name="Juergens G."/>
            <person name="Laux T."/>
        </authorList>
    </citation>
    <scope>FUNCTION</scope>
    <scope>INDUCTION</scope>
</reference>
<reference key="8">
    <citation type="journal article" date="2002" name="Development">
        <title>The WUSCHEL and SHOOTMERISTEMLESS genes fulfil complementary roles in Arabidopsis shoot meristem regulation.</title>
        <authorList>
            <person name="Lenhard M."/>
            <person name="Juergens G."/>
            <person name="Laux T."/>
        </authorList>
    </citation>
    <scope>FUNCTION</scope>
</reference>
<reference key="9">
    <citation type="journal article" date="2002" name="Development">
        <title>Combined SHOOT MERISTEMLESS and WUSCHEL trigger ectopic organogenesis in Arabidopsis.</title>
        <authorList>
            <person name="Gallois J.-L."/>
            <person name="Woodward C."/>
            <person name="Reddy G.V."/>
            <person name="Sablowski R."/>
        </authorList>
    </citation>
    <scope>FUNCTION</scope>
</reference>
<reference key="10">
    <citation type="journal article" date="2002" name="Genes Dev.">
        <title>WUSCHEL signaling functions in interregional communication during Arabidopsis ovule development.</title>
        <authorList>
            <person name="Gross-Hardt R."/>
            <person name="Lenhard M."/>
            <person name="Laux T."/>
        </authorList>
    </citation>
    <scope>FUNCTION</scope>
    <scope>TISSUE SPECIFICITY</scope>
</reference>
<reference key="11">
    <citation type="journal article" date="2002" name="Plant J.">
        <title>The WUSCHEL gene promotes vegetative-to-embryonic transition in Arabidopsis.</title>
        <authorList>
            <person name="Zuo J."/>
            <person name="Niu Q.-W."/>
            <person name="Frugis G."/>
            <person name="Chua N.-H."/>
        </authorList>
    </citation>
    <scope>FUNCTION</scope>
</reference>
<reference key="12">
    <citation type="journal article" date="2002" name="Plant Physiol.">
        <title>Regulation of CLV3 expression by two homeobox genes in Arabidopsis.</title>
        <authorList>
            <person name="Brand U."/>
            <person name="Gruenewald M."/>
            <person name="Hobe M."/>
            <person name="Simon R."/>
        </authorList>
    </citation>
    <scope>FUNCTION</scope>
</reference>
<reference key="13">
    <citation type="journal article" date="2004" name="Genes Dev.">
        <title>WUSCHEL induces shoot stem cell activity and developmental plasticity in the root meristem.</title>
        <authorList>
            <person name="Gallois J.-L."/>
            <person name="Nora F.R."/>
            <person name="Mizukami Y."/>
            <person name="Sablowski R."/>
        </authorList>
    </citation>
    <scope>FUNCTION</scope>
</reference>
<reference key="14">
    <citation type="journal article" date="2004" name="Genetics">
        <title>The ULTRAPETALA1 gene functions early in Arabidopsis development to restrict shoot apical meristem activity and acts through WUSCHEL to regulate floral meristem determinacy.</title>
        <authorList>
            <person name="Carles C.C."/>
            <person name="Lertpiriyapong K."/>
            <person name="Reville K."/>
            <person name="Fletcher J.C."/>
        </authorList>
    </citation>
    <scope>INDUCTION</scope>
</reference>
<reference key="15">
    <citation type="journal article" date="2006" name="Plant Cell">
        <title>Analysis of the transcription factor WUSCHEL and its functional homologue in Antirrhinum reveals a potential mechanism for their roles in meristem maintenance.</title>
        <authorList>
            <person name="Kieffer M."/>
            <person name="Stern Y."/>
            <person name="Cook H."/>
            <person name="Clerici E."/>
            <person name="Maulbetsch C."/>
            <person name="Laux T."/>
            <person name="Davies B."/>
        </authorList>
    </citation>
    <scope>INTERACTION WITH TPL AND TPR4</scope>
</reference>
<reference key="16">
    <citation type="journal article" date="2016" name="Plant J.">
        <title>Altered expression of the bZIP transcription factor DRINK ME affects growth and reproductive development in Arabidopsis thaliana.</title>
        <authorList>
            <person name="Lozano-Sotomayor P."/>
            <person name="Chavez Montes R.A."/>
            <person name="Silvestre-Vano M."/>
            <person name="Herrera-Ubaldo H."/>
            <person name="Greco R."/>
            <person name="Pablo-Villa J."/>
            <person name="Galliani B.M."/>
            <person name="Diaz-Ramirez D."/>
            <person name="Weemen M."/>
            <person name="Boutilier K."/>
            <person name="Pereira A."/>
            <person name="Colombo L."/>
            <person name="Madueno F."/>
            <person name="Marsch-Martinez N."/>
            <person name="de Folter S."/>
        </authorList>
    </citation>
    <scope>INTERACTION WITH BZIP30</scope>
</reference>
<evidence type="ECO:0000255" key="1">
    <source>
        <dbReference type="PROSITE-ProRule" id="PRU00108"/>
    </source>
</evidence>
<evidence type="ECO:0000256" key="2">
    <source>
        <dbReference type="SAM" id="MobiDB-lite"/>
    </source>
</evidence>
<evidence type="ECO:0000269" key="3">
    <source>
    </source>
</evidence>
<evidence type="ECO:0000269" key="4">
    <source>
    </source>
</evidence>
<evidence type="ECO:0000269" key="5">
    <source>
    </source>
</evidence>
<evidence type="ECO:0000269" key="6">
    <source>
    </source>
</evidence>
<evidence type="ECO:0000269" key="7">
    <source>
    </source>
</evidence>
<evidence type="ECO:0000269" key="8">
    <source>
    </source>
</evidence>
<evidence type="ECO:0000269" key="9">
    <source>
    </source>
</evidence>
<evidence type="ECO:0000269" key="10">
    <source>
    </source>
</evidence>
<evidence type="ECO:0000269" key="11">
    <source>
    </source>
</evidence>
<evidence type="ECO:0000269" key="12">
    <source>
    </source>
</evidence>
<evidence type="ECO:0000269" key="13">
    <source>
    </source>
</evidence>
<evidence type="ECO:0000269" key="14">
    <source>
    </source>
</evidence>
<evidence type="ECO:0000269" key="15">
    <source>
    </source>
</evidence>
<evidence type="ECO:0000305" key="16"/>
<evidence type="ECO:0007829" key="17">
    <source>
        <dbReference type="PDB" id="6RY3"/>
    </source>
</evidence>
<keyword id="KW-0002">3D-structure</keyword>
<keyword id="KW-0010">Activator</keyword>
<keyword id="KW-0217">Developmental protein</keyword>
<keyword id="KW-0221">Differentiation</keyword>
<keyword id="KW-0238">DNA-binding</keyword>
<keyword id="KW-0287">Flowering</keyword>
<keyword id="KW-0371">Homeobox</keyword>
<keyword id="KW-0539">Nucleus</keyword>
<keyword id="KW-0896">Oogenesis</keyword>
<keyword id="KW-1185">Reference proteome</keyword>
<keyword id="KW-0804">Transcription</keyword>
<keyword id="KW-0805">Transcription regulation</keyword>
<proteinExistence type="evidence at protein level"/>
<organism>
    <name type="scientific">Arabidopsis thaliana</name>
    <name type="common">Mouse-ear cress</name>
    <dbReference type="NCBI Taxonomy" id="3702"/>
    <lineage>
        <taxon>Eukaryota</taxon>
        <taxon>Viridiplantae</taxon>
        <taxon>Streptophyta</taxon>
        <taxon>Embryophyta</taxon>
        <taxon>Tracheophyta</taxon>
        <taxon>Spermatophyta</taxon>
        <taxon>Magnoliopsida</taxon>
        <taxon>eudicotyledons</taxon>
        <taxon>Gunneridae</taxon>
        <taxon>Pentapetalae</taxon>
        <taxon>rosids</taxon>
        <taxon>malvids</taxon>
        <taxon>Brassicales</taxon>
        <taxon>Brassicaceae</taxon>
        <taxon>Camelineae</taxon>
        <taxon>Arabidopsis</taxon>
    </lineage>
</organism>